<organism>
    <name type="scientific">Bifidobacterium longum (strain NCC 2705)</name>
    <dbReference type="NCBI Taxonomy" id="206672"/>
    <lineage>
        <taxon>Bacteria</taxon>
        <taxon>Bacillati</taxon>
        <taxon>Actinomycetota</taxon>
        <taxon>Actinomycetes</taxon>
        <taxon>Bifidobacteriales</taxon>
        <taxon>Bifidobacteriaceae</taxon>
        <taxon>Bifidobacterium</taxon>
    </lineage>
</organism>
<name>RL35_BIFLO</name>
<protein>
    <recommendedName>
        <fullName evidence="1">Large ribosomal subunit protein bL35</fullName>
    </recommendedName>
    <alternativeName>
        <fullName evidence="3">50S ribosomal protein L35</fullName>
    </alternativeName>
</protein>
<sequence length="64" mass="7116">MPKMKTNSAASKRAKITGTGKVKHVGSAMRHNLEHKSARKRRELSADDVLRGGQAKKLHQLLQK</sequence>
<proteinExistence type="inferred from homology"/>
<evidence type="ECO:0000255" key="1">
    <source>
        <dbReference type="HAMAP-Rule" id="MF_00514"/>
    </source>
</evidence>
<evidence type="ECO:0000256" key="2">
    <source>
        <dbReference type="SAM" id="MobiDB-lite"/>
    </source>
</evidence>
<evidence type="ECO:0000305" key="3"/>
<comment type="similarity">
    <text evidence="1">Belongs to the bacterial ribosomal protein bL35 family.</text>
</comment>
<dbReference type="EMBL" id="AE014295">
    <property type="protein sequence ID" value="AAN25167.1"/>
    <property type="molecule type" value="Genomic_DNA"/>
</dbReference>
<dbReference type="RefSeq" id="NP_696531.1">
    <property type="nucleotide sequence ID" value="NC_004307.2"/>
</dbReference>
<dbReference type="RefSeq" id="WP_007052593.1">
    <property type="nucleotide sequence ID" value="NC_004307.2"/>
</dbReference>
<dbReference type="SMR" id="Q8G4L2"/>
<dbReference type="STRING" id="206672.BL1366a"/>
<dbReference type="EnsemblBacteria" id="AAN25167">
    <property type="protein sequence ID" value="AAN25167"/>
    <property type="gene ID" value="BL1366a"/>
</dbReference>
<dbReference type="GeneID" id="69578457"/>
<dbReference type="KEGG" id="blo:BL1366a"/>
<dbReference type="PATRIC" id="fig|206672.9.peg.226"/>
<dbReference type="HOGENOM" id="CLU_169643_4_2_11"/>
<dbReference type="OrthoDB" id="9804851at2"/>
<dbReference type="PhylomeDB" id="Q8G4L2"/>
<dbReference type="Proteomes" id="UP000000439">
    <property type="component" value="Chromosome"/>
</dbReference>
<dbReference type="GO" id="GO:1990904">
    <property type="term" value="C:ribonucleoprotein complex"/>
    <property type="evidence" value="ECO:0007669"/>
    <property type="project" value="UniProtKB-KW"/>
</dbReference>
<dbReference type="GO" id="GO:0005840">
    <property type="term" value="C:ribosome"/>
    <property type="evidence" value="ECO:0007669"/>
    <property type="project" value="UniProtKB-KW"/>
</dbReference>
<dbReference type="GO" id="GO:0003735">
    <property type="term" value="F:structural constituent of ribosome"/>
    <property type="evidence" value="ECO:0007669"/>
    <property type="project" value="InterPro"/>
</dbReference>
<dbReference type="GO" id="GO:0006412">
    <property type="term" value="P:translation"/>
    <property type="evidence" value="ECO:0007669"/>
    <property type="project" value="UniProtKB-UniRule"/>
</dbReference>
<dbReference type="FunFam" id="4.10.410.60:FF:000001">
    <property type="entry name" value="50S ribosomal protein L35"/>
    <property type="match status" value="1"/>
</dbReference>
<dbReference type="Gene3D" id="4.10.410.60">
    <property type="match status" value="1"/>
</dbReference>
<dbReference type="HAMAP" id="MF_00514">
    <property type="entry name" value="Ribosomal_bL35"/>
    <property type="match status" value="1"/>
</dbReference>
<dbReference type="InterPro" id="IPR001706">
    <property type="entry name" value="Ribosomal_bL35"/>
</dbReference>
<dbReference type="InterPro" id="IPR021137">
    <property type="entry name" value="Ribosomal_bL35-like"/>
</dbReference>
<dbReference type="InterPro" id="IPR037229">
    <property type="entry name" value="Ribosomal_bL35_sf"/>
</dbReference>
<dbReference type="NCBIfam" id="TIGR00001">
    <property type="entry name" value="rpmI_bact"/>
    <property type="match status" value="1"/>
</dbReference>
<dbReference type="Pfam" id="PF01632">
    <property type="entry name" value="Ribosomal_L35p"/>
    <property type="match status" value="1"/>
</dbReference>
<dbReference type="PRINTS" id="PR00064">
    <property type="entry name" value="RIBOSOMALL35"/>
</dbReference>
<dbReference type="SUPFAM" id="SSF143034">
    <property type="entry name" value="L35p-like"/>
    <property type="match status" value="1"/>
</dbReference>
<feature type="chain" id="PRO_0000177331" description="Large ribosomal subunit protein bL35">
    <location>
        <begin position="1"/>
        <end position="64"/>
    </location>
</feature>
<feature type="region of interest" description="Disordered" evidence="2">
    <location>
        <begin position="1"/>
        <end position="64"/>
    </location>
</feature>
<feature type="compositionally biased region" description="Polar residues" evidence="2">
    <location>
        <begin position="1"/>
        <end position="10"/>
    </location>
</feature>
<feature type="compositionally biased region" description="Basic residues" evidence="2">
    <location>
        <begin position="54"/>
        <end position="64"/>
    </location>
</feature>
<keyword id="KW-1185">Reference proteome</keyword>
<keyword id="KW-0687">Ribonucleoprotein</keyword>
<keyword id="KW-0689">Ribosomal protein</keyword>
<gene>
    <name evidence="1" type="primary">rpmI</name>
    <name type="ordered locus">BL1366.1</name>
    <name type="ORF">BL1366a</name>
</gene>
<accession>Q8G4L2</accession>
<reference key="1">
    <citation type="journal article" date="2002" name="Proc. Natl. Acad. Sci. U.S.A.">
        <title>The genome sequence of Bifidobacterium longum reflects its adaptation to the human gastrointestinal tract.</title>
        <authorList>
            <person name="Schell M.A."/>
            <person name="Karmirantzou M."/>
            <person name="Snel B."/>
            <person name="Vilanova D."/>
            <person name="Berger B."/>
            <person name="Pessi G."/>
            <person name="Zwahlen M.-C."/>
            <person name="Desiere F."/>
            <person name="Bork P."/>
            <person name="Delley M."/>
            <person name="Pridmore R.D."/>
            <person name="Arigoni F."/>
        </authorList>
    </citation>
    <scope>NUCLEOTIDE SEQUENCE [LARGE SCALE GENOMIC DNA]</scope>
    <source>
        <strain>NCC 2705</strain>
    </source>
</reference>